<sequence>MVWDRQTKMEYEWKPDEQGLQQILQLLKESQSPDTTIQRTVQQKLEQLNQYPDFNNYLIFVLTKLKSEDEPTRSLSGLILKNNVKAHFQNFPNGVTDFIKSECLNNIGDSSPLIRATVGILITTIASKGELQNWPDLLPKLCSLLDSEDYNTCEGAFGALQKICEDSAEILDSDVLDRPLNIMIPKFLQFFKHSSPKIRSHAVACVNQFIISRTQALMLHIDSFIENLFALAGDEEPEVRKNVCRALVMLLEVRMDRLLPHMHNIVEYMLQRTQDQDENVALEACEFWLTLAEQPICKDVLVRHLPKLIPVLVNGMKYSDIDIILLKGDVEEDETIPDSEQDIRPRFHRSRTVAQQHDEDGIEEEDDDDDEIDDDDTISDWNLRKCSAAALDVLANVYRDELLPHILPLLKELLFHHEWVVKESGILVLGAIAEGCMQGMIPYLPELIPHLIQCLSDKKALVRSITCWTLSRYAHWVVSQPPDTYLKPLMTELLKRILDSNKRVQEAACSAFATLEEEACTELVPYLAYILDTLVFAFSKYQHKNLLILYDAIGTLADSVGHHLNKPEYIQMLMPPLIQKWNMLKDEDKDLFPLLECLSSVATALQSGFLPYCEPVYQRCVNLVQKTLAQAMLNNAQPDQYEAPDKDFMIVALDLLSGLAEGLGGNIEQLVARSNILTLMYQCMQDKMPEVRQSSFALLGDLTKACFQHVKPCIADFMPILGTNLNPEFISVCNNATWAIGEISIQMGIEMQPYIPMVLHQLVEIINRPNTPKTLLENTAITIGRLGYVCPQEVAPMLQQFIRPWCTSLRNIRDNEEKDSAFRGICTMISVNPSGVIQDFIFFCDAVASWINPKDDLRDMFCKILHGFKNQVGDENWRRFSDQFPLPLKERLAAFYGV</sequence>
<reference key="1">
    <citation type="journal article" date="1996" name="Cell">
        <title>A novel receptor-mediated nuclear protein import pathway.</title>
        <authorList>
            <person name="Pollard V.W."/>
            <person name="Michael W.M."/>
            <person name="Nakielny S."/>
            <person name="Siomi M.C."/>
            <person name="Wang F."/>
            <person name="Dreyfuss G."/>
        </authorList>
    </citation>
    <scope>NUCLEOTIDE SEQUENCE [MRNA] (ISOFORM 1)</scope>
</reference>
<reference key="2">
    <citation type="journal article" date="1997" name="Proc. Natl. Acad. Sci. U.S.A.">
        <title>Karyopherin beta2 mediates nuclear import of a mRNA binding protein.</title>
        <authorList>
            <person name="Bonifaci N."/>
            <person name="Moroianu J."/>
            <person name="Radu A."/>
            <person name="Blobel G."/>
        </authorList>
    </citation>
    <scope>NUCLEOTIDE SEQUENCE [MRNA] (ISOFORM 2)</scope>
    <source>
        <tissue>Liver</tissue>
    </source>
</reference>
<reference key="3">
    <citation type="submission" date="1996-10" db="EMBL/GenBank/DDBJ databases">
        <authorList>
            <person name="Fridell R.A."/>
            <person name="Thorne L.W."/>
            <person name="Benson R.E."/>
            <person name="Cullen B.R."/>
        </authorList>
    </citation>
    <scope>NUCLEOTIDE SEQUENCE [MRNA] (ISOFORM 2)</scope>
</reference>
<reference key="4">
    <citation type="journal article" date="2004" name="Nat. Genet.">
        <title>Complete sequencing and characterization of 21,243 full-length human cDNAs.</title>
        <authorList>
            <person name="Ota T."/>
            <person name="Suzuki Y."/>
            <person name="Nishikawa T."/>
            <person name="Otsuki T."/>
            <person name="Sugiyama T."/>
            <person name="Irie R."/>
            <person name="Wakamatsu A."/>
            <person name="Hayashi K."/>
            <person name="Sato H."/>
            <person name="Nagai K."/>
            <person name="Kimura K."/>
            <person name="Makita H."/>
            <person name="Sekine M."/>
            <person name="Obayashi M."/>
            <person name="Nishi T."/>
            <person name="Shibahara T."/>
            <person name="Tanaka T."/>
            <person name="Ishii S."/>
            <person name="Yamamoto J."/>
            <person name="Saito K."/>
            <person name="Kawai Y."/>
            <person name="Isono Y."/>
            <person name="Nakamura Y."/>
            <person name="Nagahari K."/>
            <person name="Murakami K."/>
            <person name="Yasuda T."/>
            <person name="Iwayanagi T."/>
            <person name="Wagatsuma M."/>
            <person name="Shiratori A."/>
            <person name="Sudo H."/>
            <person name="Hosoiri T."/>
            <person name="Kaku Y."/>
            <person name="Kodaira H."/>
            <person name="Kondo H."/>
            <person name="Sugawara M."/>
            <person name="Takahashi M."/>
            <person name="Kanda K."/>
            <person name="Yokoi T."/>
            <person name="Furuya T."/>
            <person name="Kikkawa E."/>
            <person name="Omura Y."/>
            <person name="Abe K."/>
            <person name="Kamihara K."/>
            <person name="Katsuta N."/>
            <person name="Sato K."/>
            <person name="Tanikawa M."/>
            <person name="Yamazaki M."/>
            <person name="Ninomiya K."/>
            <person name="Ishibashi T."/>
            <person name="Yamashita H."/>
            <person name="Murakawa K."/>
            <person name="Fujimori K."/>
            <person name="Tanai H."/>
            <person name="Kimata M."/>
            <person name="Watanabe M."/>
            <person name="Hiraoka S."/>
            <person name="Chiba Y."/>
            <person name="Ishida S."/>
            <person name="Ono Y."/>
            <person name="Takiguchi S."/>
            <person name="Watanabe S."/>
            <person name="Yosida M."/>
            <person name="Hotuta T."/>
            <person name="Kusano J."/>
            <person name="Kanehori K."/>
            <person name="Takahashi-Fujii A."/>
            <person name="Hara H."/>
            <person name="Tanase T.-O."/>
            <person name="Nomura Y."/>
            <person name="Togiya S."/>
            <person name="Komai F."/>
            <person name="Hara R."/>
            <person name="Takeuchi K."/>
            <person name="Arita M."/>
            <person name="Imose N."/>
            <person name="Musashino K."/>
            <person name="Yuuki H."/>
            <person name="Oshima A."/>
            <person name="Sasaki N."/>
            <person name="Aotsuka S."/>
            <person name="Yoshikawa Y."/>
            <person name="Matsunawa H."/>
            <person name="Ichihara T."/>
            <person name="Shiohata N."/>
            <person name="Sano S."/>
            <person name="Moriya S."/>
            <person name="Momiyama H."/>
            <person name="Satoh N."/>
            <person name="Takami S."/>
            <person name="Terashima Y."/>
            <person name="Suzuki O."/>
            <person name="Nakagawa S."/>
            <person name="Senoh A."/>
            <person name="Mizoguchi H."/>
            <person name="Goto Y."/>
            <person name="Shimizu F."/>
            <person name="Wakebe H."/>
            <person name="Hishigaki H."/>
            <person name="Watanabe T."/>
            <person name="Sugiyama A."/>
            <person name="Takemoto M."/>
            <person name="Kawakami B."/>
            <person name="Yamazaki M."/>
            <person name="Watanabe K."/>
            <person name="Kumagai A."/>
            <person name="Itakura S."/>
            <person name="Fukuzumi Y."/>
            <person name="Fujimori Y."/>
            <person name="Komiyama M."/>
            <person name="Tashiro H."/>
            <person name="Tanigami A."/>
            <person name="Fujiwara T."/>
            <person name="Ono T."/>
            <person name="Yamada K."/>
            <person name="Fujii Y."/>
            <person name="Ozaki K."/>
            <person name="Hirao M."/>
            <person name="Ohmori Y."/>
            <person name="Kawabata A."/>
            <person name="Hikiji T."/>
            <person name="Kobatake N."/>
            <person name="Inagaki H."/>
            <person name="Ikema Y."/>
            <person name="Okamoto S."/>
            <person name="Okitani R."/>
            <person name="Kawakami T."/>
            <person name="Noguchi S."/>
            <person name="Itoh T."/>
            <person name="Shigeta K."/>
            <person name="Senba T."/>
            <person name="Matsumura K."/>
            <person name="Nakajima Y."/>
            <person name="Mizuno T."/>
            <person name="Morinaga M."/>
            <person name="Sasaki M."/>
            <person name="Togashi T."/>
            <person name="Oyama M."/>
            <person name="Hata H."/>
            <person name="Watanabe M."/>
            <person name="Komatsu T."/>
            <person name="Mizushima-Sugano J."/>
            <person name="Satoh T."/>
            <person name="Shirai Y."/>
            <person name="Takahashi Y."/>
            <person name="Nakagawa K."/>
            <person name="Okumura K."/>
            <person name="Nagase T."/>
            <person name="Nomura N."/>
            <person name="Kikuchi H."/>
            <person name="Masuho Y."/>
            <person name="Yamashita R."/>
            <person name="Nakai K."/>
            <person name="Yada T."/>
            <person name="Nakamura Y."/>
            <person name="Ohara O."/>
            <person name="Isogai T."/>
            <person name="Sugano S."/>
        </authorList>
    </citation>
    <scope>NUCLEOTIDE SEQUENCE [LARGE SCALE MRNA] (ISOFORM 3)</scope>
    <source>
        <tissue>Spleen</tissue>
    </source>
</reference>
<reference key="5">
    <citation type="journal article" date="2004" name="Nature">
        <title>The DNA sequence and comparative analysis of human chromosome 5.</title>
        <authorList>
            <person name="Schmutz J."/>
            <person name="Martin J."/>
            <person name="Terry A."/>
            <person name="Couronne O."/>
            <person name="Grimwood J."/>
            <person name="Lowry S."/>
            <person name="Gordon L.A."/>
            <person name="Scott D."/>
            <person name="Xie G."/>
            <person name="Huang W."/>
            <person name="Hellsten U."/>
            <person name="Tran-Gyamfi M."/>
            <person name="She X."/>
            <person name="Prabhakar S."/>
            <person name="Aerts A."/>
            <person name="Altherr M."/>
            <person name="Bajorek E."/>
            <person name="Black S."/>
            <person name="Branscomb E."/>
            <person name="Caoile C."/>
            <person name="Challacombe J.F."/>
            <person name="Chan Y.M."/>
            <person name="Denys M."/>
            <person name="Detter J.C."/>
            <person name="Escobar J."/>
            <person name="Flowers D."/>
            <person name="Fotopulos D."/>
            <person name="Glavina T."/>
            <person name="Gomez M."/>
            <person name="Gonzales E."/>
            <person name="Goodstein D."/>
            <person name="Grigoriev I."/>
            <person name="Groza M."/>
            <person name="Hammon N."/>
            <person name="Hawkins T."/>
            <person name="Haydu L."/>
            <person name="Israni S."/>
            <person name="Jett J."/>
            <person name="Kadner K."/>
            <person name="Kimball H."/>
            <person name="Kobayashi A."/>
            <person name="Lopez F."/>
            <person name="Lou Y."/>
            <person name="Martinez D."/>
            <person name="Medina C."/>
            <person name="Morgan J."/>
            <person name="Nandkeshwar R."/>
            <person name="Noonan J.P."/>
            <person name="Pitluck S."/>
            <person name="Pollard M."/>
            <person name="Predki P."/>
            <person name="Priest J."/>
            <person name="Ramirez L."/>
            <person name="Retterer J."/>
            <person name="Rodriguez A."/>
            <person name="Rogers S."/>
            <person name="Salamov A."/>
            <person name="Salazar A."/>
            <person name="Thayer N."/>
            <person name="Tice H."/>
            <person name="Tsai M."/>
            <person name="Ustaszewska A."/>
            <person name="Vo N."/>
            <person name="Wheeler J."/>
            <person name="Wu K."/>
            <person name="Yang J."/>
            <person name="Dickson M."/>
            <person name="Cheng J.-F."/>
            <person name="Eichler E.E."/>
            <person name="Olsen A."/>
            <person name="Pennacchio L.A."/>
            <person name="Rokhsar D.S."/>
            <person name="Richardson P."/>
            <person name="Lucas S.M."/>
            <person name="Myers R.M."/>
            <person name="Rubin E.M."/>
        </authorList>
    </citation>
    <scope>NUCLEOTIDE SEQUENCE [LARGE SCALE GENOMIC DNA]</scope>
</reference>
<reference key="6">
    <citation type="journal article" date="2004" name="Genome Res.">
        <title>The status, quality, and expansion of the NIH full-length cDNA project: the Mammalian Gene Collection (MGC).</title>
        <authorList>
            <consortium name="The MGC Project Team"/>
        </authorList>
    </citation>
    <scope>NUCLEOTIDE SEQUENCE [LARGE SCALE MRNA] (ISOFORM 1)</scope>
    <source>
        <tissue>Brain</tissue>
    </source>
</reference>
<reference key="7">
    <citation type="journal article" date="1996" name="Exp. Cell Res.">
        <title>Transportin: nuclear transport receptor of a novel nuclear protein import pathway.</title>
        <authorList>
            <person name="Nakielny S."/>
            <person name="Siomi M.C."/>
            <person name="Siomi H."/>
            <person name="Michael W.M."/>
            <person name="Pollard V."/>
            <person name="Dreyfuss G."/>
        </authorList>
    </citation>
    <scope>FUNCTION</scope>
</reference>
<reference key="8">
    <citation type="journal article" date="1997" name="EMBO J.">
        <title>The asymmetric distribution of the constituents of the Ran system is essential for transport into and out of the nucleus.</title>
        <authorList>
            <person name="Izaurralde E."/>
            <person name="Kutay U."/>
            <person name="von Kobbe C."/>
            <person name="Mattaj I.W."/>
            <person name="Goerlich D."/>
        </authorList>
    </citation>
    <scope>INTERACTION WITH RAN</scope>
</reference>
<reference key="9">
    <citation type="journal article" date="1997" name="FEBS Lett.">
        <title>RanBP1 is crucial for the release of RanGTP from importin beta-related nuclear transport factors.</title>
        <authorList>
            <person name="Bischoff F.R."/>
            <person name="Goerlich D."/>
        </authorList>
    </citation>
    <scope>SUBUNIT</scope>
</reference>
<reference key="10">
    <citation type="journal article" date="1998" name="Biochim. Biophys. Acta">
        <title>Molecular cloning of the cDNA encoding A + U-rich element RNA binding factor.</title>
        <authorList>
            <person name="Doi A."/>
            <person name="Shiosaka T."/>
            <person name="Takaoka Y."/>
            <person name="Yanagisawa K."/>
            <person name="Fujita S."/>
        </authorList>
    </citation>
    <scope>INTERACTION WITH HNRNPDL</scope>
</reference>
<reference key="11">
    <citation type="journal article" date="1998" name="EMBO J.">
        <title>Importin beta, transportin, RanBP5 and RanBP7 mediate nuclear import of ribosomal proteins in mammalian cells.</title>
        <authorList>
            <person name="Jaekel S."/>
            <person name="Goerlich D."/>
        </authorList>
    </citation>
    <scope>FUNCTION</scope>
    <scope>INTERACTION WITH RPL23A; RPS7 AND RPL5</scope>
</reference>
<reference key="12">
    <citation type="journal article" date="2001" name="J. Cell Sci.">
        <title>Signal recognition particle protein 19 is imported into the nucleus by importin 8 (RanBP8) and transportin.</title>
        <authorList>
            <person name="Dean K.A."/>
            <person name="von Ahsen O."/>
            <person name="Goerlich D."/>
            <person name="Fried H.M."/>
        </authorList>
    </citation>
    <scope>FUNCTION</scope>
    <scope>INTERACTION WITH RPL23A AND SRP19</scope>
</reference>
<reference key="13">
    <citation type="journal article" date="2006" name="J. Biol. Chem.">
        <title>Multiple importins function as nuclear transport receptors for the Rev protein of human immunodeficiency virus type 1.</title>
        <authorList>
            <person name="Arnold M."/>
            <person name="Nath A."/>
            <person name="Hauber J."/>
            <person name="Kehlenbach R.H."/>
        </authorList>
    </citation>
    <scope>INTERACTION WITH HIV-1 REV</scope>
    <scope>FUNCTION</scope>
</reference>
<reference key="14">
    <citation type="journal article" date="2009" name="Anal. Chem.">
        <title>Lys-N and trypsin cover complementary parts of the phosphoproteome in a refined SCX-based approach.</title>
        <authorList>
            <person name="Gauci S."/>
            <person name="Helbig A.O."/>
            <person name="Slijper M."/>
            <person name="Krijgsveld J."/>
            <person name="Heck A.J."/>
            <person name="Mohammed S."/>
        </authorList>
    </citation>
    <scope>ACETYLATION [LARGE SCALE ANALYSIS] AT MET-1 (ISOFORM 2)</scope>
    <scope>IDENTIFICATION BY MASS SPECTROMETRY [LARGE SCALE ANALYSIS]</scope>
</reference>
<reference key="15">
    <citation type="journal article" date="2009" name="J. Cell Sci.">
        <title>Characterization of Snail nuclear import pathways as representatives of C2H2 zinc finger transcription factors.</title>
        <authorList>
            <person name="Mingot J.M."/>
            <person name="Vega S."/>
            <person name="Maestro B."/>
            <person name="Sanz J.M."/>
            <person name="Nieto M.A."/>
        </authorList>
    </citation>
    <scope>INTERACTION WITH SNAI1 AND SNAI2</scope>
</reference>
<reference key="16">
    <citation type="journal article" date="2009" name="Mol. Cell. Biol.">
        <title>RNA-regulated interaction of transportin-1 and exportin-5 with the double-stranded RNA-binding domain regulates nucleocytoplasmic shuttling of ADAR1.</title>
        <authorList>
            <person name="Fritz J."/>
            <person name="Strehblow A."/>
            <person name="Taschner A."/>
            <person name="Schopoff S."/>
            <person name="Pasierbek P."/>
            <person name="Jantsch M.F."/>
        </authorList>
    </citation>
    <scope>FUNCTION</scope>
    <scope>INTERACTION WITH ADAR</scope>
</reference>
<reference key="17">
    <citation type="journal article" date="2011" name="BMC Syst. Biol.">
        <title>Initial characterization of the human central proteome.</title>
        <authorList>
            <person name="Burkard T.R."/>
            <person name="Planyavsky M."/>
            <person name="Kaupe I."/>
            <person name="Breitwieser F.P."/>
            <person name="Buerckstuemmer T."/>
            <person name="Bennett K.L."/>
            <person name="Superti-Furga G."/>
            <person name="Colinge J."/>
        </authorList>
    </citation>
    <scope>IDENTIFICATION BY MASS SPECTROMETRY [LARGE SCALE ANALYSIS]</scope>
</reference>
<reference key="18">
    <citation type="journal article" date="2012" name="Mol. Cell. Proteomics">
        <title>Comparative large-scale characterisation of plant vs. mammal proteins reveals similar and idiosyncratic N-alpha acetylation features.</title>
        <authorList>
            <person name="Bienvenut W.V."/>
            <person name="Sumpton D."/>
            <person name="Martinez A."/>
            <person name="Lilla S."/>
            <person name="Espagne C."/>
            <person name="Meinnel T."/>
            <person name="Giglione C."/>
        </authorList>
    </citation>
    <scope>ACETYLATION [LARGE SCALE ANALYSIS] AT MET-1 (ISOFORM 2)</scope>
    <scope>IDENTIFICATION BY MASS SPECTROMETRY [LARGE SCALE ANALYSIS]</scope>
</reference>
<reference key="19">
    <citation type="journal article" date="2014" name="Proc. Natl. Acad. Sci. U.S.A.">
        <title>A bimodular nuclear localization signal assembled via an extended double-stranded RNA-binding domain acts as an RNA-sensing signal for transportin 1.</title>
        <authorList>
            <person name="Barraud P."/>
            <person name="Banerjee S."/>
            <person name="Mohamed W.I."/>
            <person name="Jantsch M.F."/>
            <person name="Allain F.H."/>
        </authorList>
    </citation>
    <scope>FUNCTION</scope>
    <scope>INTERACTION WITH ADAR</scope>
    <scope>MUTAGENESIS OF TRP-468 AND TRP-738</scope>
</reference>
<reference key="20">
    <citation type="journal article" date="1999" name="Nature">
        <title>Structure of the nuclear transport complex karyopherin-beta2-Ran x GppNHp.</title>
        <authorList>
            <person name="Chook Y.M."/>
            <person name="Blobel G."/>
        </authorList>
    </citation>
    <scope>X-RAY CRYSTALLOGRAPHY (3.0 ANGSTROMS) IN COMPLEX WITH RAN</scope>
    <scope>REPEAT STRUCTURE</scope>
</reference>
<reference evidence="18" key="21">
    <citation type="journal article" date="2022" name="J. Cell Biol.">
        <title>Tumor suppressor BAP1 nuclear import is governed by transportin-1.</title>
        <authorList>
            <person name="Yang T.J."/>
            <person name="Li T.N."/>
            <person name="Huang R.S."/>
            <person name="Pan M.Y."/>
            <person name="Lin S.Y."/>
            <person name="Lin S."/>
            <person name="Wu K.P."/>
            <person name="Wang L.H."/>
            <person name="Hsu S.D."/>
        </authorList>
    </citation>
    <scope>X-RAY CRYSTALLOGRAPHY (3.76 ANGSTROMS) OF 8-344 AND 376-898 IN COMPLEX WITH BAP1</scope>
    <scope>FUNCTION</scope>
    <scope>INTERACTION WITH BAP1</scope>
    <scope>IDENTIFICATION BY MASS SPECTROMETRY</scope>
</reference>
<evidence type="ECO:0000250" key="1">
    <source>
        <dbReference type="UniProtKB" id="Q8BFY9"/>
    </source>
</evidence>
<evidence type="ECO:0000255" key="2">
    <source>
        <dbReference type="PROSITE-ProRule" id="PRU00115"/>
    </source>
</evidence>
<evidence type="ECO:0000256" key="3">
    <source>
        <dbReference type="SAM" id="MobiDB-lite"/>
    </source>
</evidence>
<evidence type="ECO:0000269" key="4">
    <source>
    </source>
</evidence>
<evidence type="ECO:0000269" key="5">
    <source>
    </source>
</evidence>
<evidence type="ECO:0000269" key="6">
    <source>
    </source>
</evidence>
<evidence type="ECO:0000269" key="7">
    <source>
    </source>
</evidence>
<evidence type="ECO:0000269" key="8">
    <source>
    </source>
</evidence>
<evidence type="ECO:0000269" key="9">
    <source>
    </source>
</evidence>
<evidence type="ECO:0000269" key="10">
    <source>
    </source>
</evidence>
<evidence type="ECO:0000269" key="11">
    <source>
    </source>
</evidence>
<evidence type="ECO:0000269" key="12">
    <source>
    </source>
</evidence>
<evidence type="ECO:0000269" key="13">
    <source>
    </source>
</evidence>
<evidence type="ECO:0000303" key="14">
    <source>
    </source>
</evidence>
<evidence type="ECO:0000303" key="15">
    <source>
    </source>
</evidence>
<evidence type="ECO:0000303" key="16">
    <source ref="3"/>
</evidence>
<evidence type="ECO:0000305" key="17"/>
<evidence type="ECO:0007744" key="18">
    <source>
        <dbReference type="PDB" id="7VPW"/>
    </source>
</evidence>
<evidence type="ECO:0007744" key="19">
    <source>
    </source>
</evidence>
<evidence type="ECO:0007744" key="20">
    <source>
    </source>
</evidence>
<evidence type="ECO:0007829" key="21">
    <source>
        <dbReference type="PDB" id="1QBK"/>
    </source>
</evidence>
<evidence type="ECO:0007829" key="22">
    <source>
        <dbReference type="PDB" id="2H4M"/>
    </source>
</evidence>
<evidence type="ECO:0007829" key="23">
    <source>
        <dbReference type="PDB" id="2OT8"/>
    </source>
</evidence>
<evidence type="ECO:0007829" key="24">
    <source>
        <dbReference type="PDB" id="2QMR"/>
    </source>
</evidence>
<evidence type="ECO:0007829" key="25">
    <source>
        <dbReference type="PDB" id="2Z5K"/>
    </source>
</evidence>
<evidence type="ECO:0007829" key="26">
    <source>
        <dbReference type="PDB" id="4FDD"/>
    </source>
</evidence>
<evidence type="ECO:0007829" key="27">
    <source>
        <dbReference type="PDB" id="4FQ3"/>
    </source>
</evidence>
<evidence type="ECO:0007829" key="28">
    <source>
        <dbReference type="PDB" id="4OO6"/>
    </source>
</evidence>
<evidence type="ECO:0007829" key="29">
    <source>
        <dbReference type="PDB" id="5TQC"/>
    </source>
</evidence>
<evidence type="ECO:0007829" key="30">
    <source>
        <dbReference type="PDB" id="8SGH"/>
    </source>
</evidence>
<proteinExistence type="evidence at protein level"/>
<gene>
    <name type="primary">TNPO1</name>
    <name type="synonym">KPNB2</name>
    <name type="synonym">MIP1</name>
    <name type="synonym">TRN</name>
</gene>
<feature type="chain" id="PRO_0000120765" description="Transportin-1">
    <location>
        <begin position="1"/>
        <end position="898"/>
    </location>
</feature>
<feature type="repeat" description="HEAT 1" evidence="4">
    <location>
        <begin position="19"/>
        <end position="46"/>
    </location>
</feature>
<feature type="domain" description="Importin N-terminal" evidence="2">
    <location>
        <begin position="41"/>
        <end position="109"/>
    </location>
</feature>
<feature type="repeat" description="HEAT 2" evidence="4">
    <location>
        <begin position="51"/>
        <end position="89"/>
    </location>
</feature>
<feature type="repeat" description="HEAT 3" evidence="4">
    <location>
        <begin position="98"/>
        <end position="131"/>
    </location>
</feature>
<feature type="repeat" description="HEAT 4" evidence="4">
    <location>
        <begin position="137"/>
        <end position="174"/>
    </location>
</feature>
<feature type="repeat" description="HEAT 5" evidence="4">
    <location>
        <begin position="181"/>
        <end position="211"/>
    </location>
</feature>
<feature type="repeat" description="HEAT 6" evidence="4">
    <location>
        <begin position="224"/>
        <end position="251"/>
    </location>
</feature>
<feature type="repeat" description="HEAT 7" evidence="4">
    <location>
        <begin position="263"/>
        <end position="290"/>
    </location>
</feature>
<feature type="repeat" description="HEAT 8" evidence="4">
    <location>
        <begin position="306"/>
        <end position="397"/>
    </location>
</feature>
<feature type="repeat" description="HEAT 9" evidence="4">
    <location>
        <begin position="405"/>
        <end position="433"/>
    </location>
</feature>
<feature type="repeat" description="HEAT 10" evidence="4">
    <location>
        <begin position="445"/>
        <end position="472"/>
    </location>
</feature>
<feature type="repeat" description="HEAT 11" evidence="4">
    <location>
        <begin position="486"/>
        <end position="519"/>
    </location>
</feature>
<feature type="repeat" description="HEAT 12" evidence="4">
    <location>
        <begin position="527"/>
        <end position="560"/>
    </location>
</feature>
<feature type="repeat" description="HEAT 13" evidence="4">
    <location>
        <begin position="568"/>
        <end position="606"/>
    </location>
</feature>
<feature type="repeat" description="HEAT 14" evidence="4">
    <location>
        <begin position="614"/>
        <end position="665"/>
    </location>
</feature>
<feature type="repeat" description="HEAT 15" evidence="4">
    <location>
        <begin position="676"/>
        <end position="707"/>
    </location>
</feature>
<feature type="repeat" description="HEAT 16" evidence="4">
    <location>
        <begin position="715"/>
        <end position="748"/>
    </location>
</feature>
<feature type="repeat" description="HEAT 17" evidence="4">
    <location>
        <begin position="756"/>
        <end position="791"/>
    </location>
</feature>
<feature type="repeat" description="HEAT 18" evidence="4">
    <location>
        <begin position="799"/>
        <end position="832"/>
    </location>
</feature>
<feature type="repeat" description="HEAT 19" evidence="4">
    <location>
        <begin position="841"/>
        <end position="872"/>
    </location>
</feature>
<feature type="repeat" description="HEAT 20" evidence="4">
    <location>
        <begin position="875"/>
        <end position="895"/>
    </location>
</feature>
<feature type="region of interest" description="Disordered" evidence="3">
    <location>
        <begin position="347"/>
        <end position="374"/>
    </location>
</feature>
<feature type="compositionally biased region" description="Acidic residues" evidence="3">
    <location>
        <begin position="360"/>
        <end position="374"/>
    </location>
</feature>
<feature type="site" description="Important for interaction with cargo nuclear localization signals" evidence="9">
    <location>
        <position position="468"/>
    </location>
</feature>
<feature type="site" description="Important for interaction with cargo nuclear localization signals" evidence="9">
    <location>
        <position position="738"/>
    </location>
</feature>
<feature type="splice variant" id="VSP_038028" description="In isoform 2." evidence="15 16">
    <original>MVWDRQTKM</original>
    <variation>M</variation>
    <location>
        <begin position="1"/>
        <end position="9"/>
    </location>
</feature>
<feature type="splice variant" id="VSP_038029" description="In isoform 3." evidence="14">
    <location>
        <begin position="69"/>
        <end position="118"/>
    </location>
</feature>
<feature type="mutagenesis site" description="Abolishes interaction with the ADAR nuclear localization signal. Abolishes ADAR nuclear import." evidence="9">
    <original>W</original>
    <variation>A</variation>
    <location>
        <position position="468"/>
    </location>
</feature>
<feature type="mutagenesis site" description="Abolishes interaction with the ADAR nuclear localization signal. Abolishes ADAR nuclear import." evidence="9">
    <original>W</original>
    <variation>A</variation>
    <location>
        <position position="738"/>
    </location>
</feature>
<feature type="sequence conflict" description="In Ref. 3; AAB68948." evidence="17" ref="3">
    <original>L</original>
    <variation>S</variation>
    <location>
        <position position="104"/>
    </location>
</feature>
<feature type="sequence conflict" description="In Ref. 1; AAC50723." evidence="17" ref="1">
    <original>I</original>
    <variation>T</variation>
    <location>
        <position position="225"/>
    </location>
</feature>
<feature type="sequence conflict" description="In Ref. 3; AAB68948." evidence="17" ref="3">
    <original>Q</original>
    <variation>L</variation>
    <location>
        <position position="669"/>
    </location>
</feature>
<feature type="sequence conflict" description="In Ref. 4; BAG62638." evidence="17" ref="4">
    <original>F</original>
    <variation>L</variation>
    <location>
        <position position="880"/>
    </location>
</feature>
<feature type="helix" evidence="26">
    <location>
        <begin position="17"/>
        <end position="30"/>
    </location>
</feature>
<feature type="strand" evidence="22">
    <location>
        <begin position="31"/>
        <end position="33"/>
    </location>
</feature>
<feature type="helix" evidence="26">
    <location>
        <begin position="35"/>
        <end position="48"/>
    </location>
</feature>
<feature type="strand" evidence="24">
    <location>
        <begin position="49"/>
        <end position="51"/>
    </location>
</feature>
<feature type="helix" evidence="26">
    <location>
        <begin position="52"/>
        <end position="63"/>
    </location>
</feature>
<feature type="helix" evidence="26">
    <location>
        <begin position="70"/>
        <end position="83"/>
    </location>
</feature>
<feature type="turn" evidence="26">
    <location>
        <begin position="84"/>
        <end position="86"/>
    </location>
</feature>
<feature type="helix" evidence="26">
    <location>
        <begin position="88"/>
        <end position="90"/>
    </location>
</feature>
<feature type="helix" evidence="26">
    <location>
        <begin position="93"/>
        <end position="104"/>
    </location>
</feature>
<feature type="turn" evidence="26">
    <location>
        <begin position="105"/>
        <end position="108"/>
    </location>
</feature>
<feature type="helix" evidence="26">
    <location>
        <begin position="112"/>
        <end position="128"/>
    </location>
</feature>
<feature type="turn" evidence="26">
    <location>
        <begin position="129"/>
        <end position="133"/>
    </location>
</feature>
<feature type="strand" evidence="27">
    <location>
        <begin position="134"/>
        <end position="136"/>
    </location>
</feature>
<feature type="helix" evidence="26">
    <location>
        <begin position="137"/>
        <end position="145"/>
    </location>
</feature>
<feature type="helix" evidence="21">
    <location>
        <begin position="147"/>
        <end position="149"/>
    </location>
</feature>
<feature type="helix" evidence="26">
    <location>
        <begin position="150"/>
        <end position="167"/>
    </location>
</feature>
<feature type="helix" evidence="26">
    <location>
        <begin position="170"/>
        <end position="173"/>
    </location>
</feature>
<feature type="strand" evidence="26">
    <location>
        <begin position="175"/>
        <end position="178"/>
    </location>
</feature>
<feature type="helix" evidence="26">
    <location>
        <begin position="180"/>
        <end position="187"/>
    </location>
</feature>
<feature type="turn" evidence="26">
    <location>
        <begin position="188"/>
        <end position="192"/>
    </location>
</feature>
<feature type="helix" evidence="26">
    <location>
        <begin position="196"/>
        <end position="207"/>
    </location>
</feature>
<feature type="turn" evidence="26">
    <location>
        <begin position="208"/>
        <end position="213"/>
    </location>
</feature>
<feature type="helix" evidence="26">
    <location>
        <begin position="215"/>
        <end position="218"/>
    </location>
</feature>
<feature type="helix" evidence="26">
    <location>
        <begin position="221"/>
        <end position="232"/>
    </location>
</feature>
<feature type="helix" evidence="26">
    <location>
        <begin position="237"/>
        <end position="253"/>
    </location>
</feature>
<feature type="helix" evidence="26">
    <location>
        <begin position="255"/>
        <end position="258"/>
    </location>
</feature>
<feature type="helix" evidence="26">
    <location>
        <begin position="259"/>
        <end position="261"/>
    </location>
</feature>
<feature type="helix" evidence="26">
    <location>
        <begin position="262"/>
        <end position="273"/>
    </location>
</feature>
<feature type="strand" evidence="23">
    <location>
        <begin position="275"/>
        <end position="277"/>
    </location>
</feature>
<feature type="helix" evidence="26">
    <location>
        <begin position="278"/>
        <end position="291"/>
    </location>
</feature>
<feature type="strand" evidence="25">
    <location>
        <begin position="294"/>
        <end position="296"/>
    </location>
</feature>
<feature type="helix" evidence="26">
    <location>
        <begin position="297"/>
        <end position="301"/>
    </location>
</feature>
<feature type="turn" evidence="26">
    <location>
        <begin position="302"/>
        <end position="304"/>
    </location>
</feature>
<feature type="helix" evidence="26">
    <location>
        <begin position="305"/>
        <end position="315"/>
    </location>
</feature>
<feature type="helix" evidence="26">
    <location>
        <begin position="320"/>
        <end position="327"/>
    </location>
</feature>
<feature type="helix" evidence="21">
    <location>
        <begin position="340"/>
        <end position="342"/>
    </location>
</feature>
<feature type="helix" evidence="21">
    <location>
        <begin position="367"/>
        <end position="370"/>
    </location>
</feature>
<feature type="helix" evidence="30">
    <location>
        <begin position="372"/>
        <end position="379"/>
    </location>
</feature>
<feature type="helix" evidence="26">
    <location>
        <begin position="383"/>
        <end position="398"/>
    </location>
</feature>
<feature type="helix" evidence="26">
    <location>
        <begin position="399"/>
        <end position="402"/>
    </location>
</feature>
<feature type="helix" evidence="26">
    <location>
        <begin position="403"/>
        <end position="414"/>
    </location>
</feature>
<feature type="strand" evidence="21">
    <location>
        <begin position="416"/>
        <end position="418"/>
    </location>
</feature>
<feature type="helix" evidence="26">
    <location>
        <begin position="419"/>
        <end position="431"/>
    </location>
</feature>
<feature type="turn" evidence="26">
    <location>
        <begin position="432"/>
        <end position="436"/>
    </location>
</feature>
<feature type="helix" evidence="26">
    <location>
        <begin position="437"/>
        <end position="440"/>
    </location>
</feature>
<feature type="helix" evidence="26">
    <location>
        <begin position="441"/>
        <end position="443"/>
    </location>
</feature>
<feature type="helix" evidence="26">
    <location>
        <begin position="444"/>
        <end position="454"/>
    </location>
</feature>
<feature type="helix" evidence="26">
    <location>
        <begin position="460"/>
        <end position="472"/>
    </location>
</feature>
<feature type="helix" evidence="26">
    <location>
        <begin position="474"/>
        <end position="479"/>
    </location>
</feature>
<feature type="turn" evidence="26">
    <location>
        <begin position="482"/>
        <end position="485"/>
    </location>
</feature>
<feature type="helix" evidence="26">
    <location>
        <begin position="486"/>
        <end position="497"/>
    </location>
</feature>
<feature type="strand" evidence="21">
    <location>
        <begin position="498"/>
        <end position="500"/>
    </location>
</feature>
<feature type="helix" evidence="26">
    <location>
        <begin position="502"/>
        <end position="519"/>
    </location>
</feature>
<feature type="helix" evidence="26">
    <location>
        <begin position="520"/>
        <end position="526"/>
    </location>
</feature>
<feature type="helix" evidence="26">
    <location>
        <begin position="527"/>
        <end position="540"/>
    </location>
</feature>
<feature type="helix" evidence="26">
    <location>
        <begin position="543"/>
        <end position="560"/>
    </location>
</feature>
<feature type="helix" evidence="26">
    <location>
        <begin position="561"/>
        <end position="564"/>
    </location>
</feature>
<feature type="helix" evidence="26">
    <location>
        <begin position="567"/>
        <end position="583"/>
    </location>
</feature>
<feature type="helix" evidence="26">
    <location>
        <begin position="591"/>
        <end position="605"/>
    </location>
</feature>
<feature type="helix" evidence="26">
    <location>
        <begin position="606"/>
        <end position="612"/>
    </location>
</feature>
<feature type="helix" evidence="26">
    <location>
        <begin position="613"/>
        <end position="636"/>
    </location>
</feature>
<feature type="turn" evidence="26">
    <location>
        <begin position="638"/>
        <end position="640"/>
    </location>
</feature>
<feature type="helix" evidence="26">
    <location>
        <begin position="647"/>
        <end position="663"/>
    </location>
</feature>
<feature type="helix" evidence="26">
    <location>
        <begin position="664"/>
        <end position="667"/>
    </location>
</feature>
<feature type="helix" evidence="26">
    <location>
        <begin position="668"/>
        <end position="672"/>
    </location>
</feature>
<feature type="helix" evidence="26">
    <location>
        <begin position="676"/>
        <end position="683"/>
    </location>
</feature>
<feature type="helix" evidence="26">
    <location>
        <begin position="689"/>
        <end position="705"/>
    </location>
</feature>
<feature type="helix" evidence="26">
    <location>
        <begin position="707"/>
        <end position="709"/>
    </location>
</feature>
<feature type="helix" evidence="26">
    <location>
        <begin position="711"/>
        <end position="713"/>
    </location>
</feature>
<feature type="helix" evidence="26">
    <location>
        <begin position="714"/>
        <end position="723"/>
    </location>
</feature>
<feature type="helix" evidence="28">
    <location>
        <begin position="727"/>
        <end position="729"/>
    </location>
</feature>
<feature type="helix" evidence="26">
    <location>
        <begin position="730"/>
        <end position="747"/>
    </location>
</feature>
<feature type="helix" evidence="26">
    <location>
        <begin position="748"/>
        <end position="755"/>
    </location>
</feature>
<feature type="helix" evidence="26">
    <location>
        <begin position="756"/>
        <end position="766"/>
    </location>
</feature>
<feature type="strand" evidence="29">
    <location>
        <begin position="768"/>
        <end position="770"/>
    </location>
</feature>
<feature type="helix" evidence="26">
    <location>
        <begin position="773"/>
        <end position="789"/>
    </location>
</feature>
<feature type="helix" evidence="26">
    <location>
        <begin position="791"/>
        <end position="794"/>
    </location>
</feature>
<feature type="helix" evidence="26">
    <location>
        <begin position="795"/>
        <end position="797"/>
    </location>
</feature>
<feature type="helix" evidence="26">
    <location>
        <begin position="798"/>
        <end position="810"/>
    </location>
</feature>
<feature type="helix" evidence="26">
    <location>
        <begin position="816"/>
        <end position="831"/>
    </location>
</feature>
<feature type="helix" evidence="26">
    <location>
        <begin position="833"/>
        <end position="835"/>
    </location>
</feature>
<feature type="helix" evidence="26">
    <location>
        <begin position="837"/>
        <end position="839"/>
    </location>
</feature>
<feature type="helix" evidence="26">
    <location>
        <begin position="840"/>
        <end position="848"/>
    </location>
</feature>
<feature type="helix" evidence="26">
    <location>
        <begin position="855"/>
        <end position="880"/>
    </location>
</feature>
<feature type="helix" evidence="26">
    <location>
        <begin position="881"/>
        <end position="883"/>
    </location>
</feature>
<feature type="helix" evidence="26">
    <location>
        <begin position="886"/>
        <end position="894"/>
    </location>
</feature>
<feature type="modified residue" description="N-acetylmethionine" evidence="19 20">
    <location sequence="Q92973-2">
        <position position="1"/>
    </location>
</feature>
<comment type="function">
    <text evidence="1 5 7 9 10 11 13">Functions in nuclear protein import as nuclear transport receptor. Serves as receptor for nuclear localization signals (NLS) in cargo substrates (PubMed:24753571). May mediate docking of the importin/substrate complex to the nuclear pore complex (NPC) through binding to nucleoporin and the complex is subsequently translocated through the pore by an energy requiring, Ran-dependent mechanism. At the nucleoplasmic side of the NPC, Ran binds to the importin, the importin/substrate complex dissociates and importin is re-exported from the nucleus to the cytoplasm where GTP hydrolysis releases Ran. The directionality of nuclear import is thought to be conferred by an asymmetric distribution of the GTP- and GDP-bound forms of Ran between the cytoplasm and nucleus (By similarity). Involved in nuclear import of M9-containing proteins. In vitro, binds directly to the M9 region of the heterogeneous nuclear ribonucleoproteins (hnRNP), A1 and A2 and mediates their nuclear import. Involved in hnRNP A1/A2 nuclear export. Mediates the nuclear import of ribosomal proteins RPL23A, RPS7 and RPL5 (PubMed:11682607). In vitro, mediates nuclear import of H2A, H2B, H3 and H4 histones (By similarity). In vitro, mediates nuclear import of SRP19 (PubMed:11682607). Mediates nuclear import of ADAR/ADAR1 isoform 1 and isoform 5 in a RanGTP-dependent manner (PubMed:19124606, PubMed:24753571). Main mediator of PR-DUB complex component BAP1 nuclear import; acts redundantly with the karyopherins KPNA1 and KPNA2 (PubMed:35446349).</text>
</comment>
<comment type="function">
    <text evidence="6">(Microbial infection) In case of HIV-1 infection, binds and mediates the nuclear import of HIV-1 Rev.</text>
</comment>
<comment type="subunit">
    <text evidence="1 5 7 8 9 10 12 13">Identified in a complex that contains TNPO1, RAN and RANBP1 (PubMed:9428644). Binds HNRPA1, HNRPA2, HNRNPDL, RPS7, RPL5 and RAN. Interacts with H2A, H2B, H3 and H4 histones (By similarity). Interacts with isoform 1 and isoform 5 of ADAR/ADAR1 (via DRBM 3 domain) (PubMed:19124606, PubMed:24753571). Interacts with SNAI1 (via zinc fingers); the interaction mediates SNAI1 nuclear import (PubMed:19386897). Interacts with SNAI2 (via zinc fingers) (PubMed:19386897). Interacts with RPL23A (via BIB domain) and SRP19; this interaction is involved in RPL23A and SRP19 import into the nucleus (PubMed:11682607). Interacts (via HEAT repeats 8-12) with BAP1 (via non-classical PY-NLS); this interaction is direct, is involved in BAP1 nuclear import and disrupts BAP1 homodimerization (PubMed:35446349).</text>
</comment>
<comment type="subunit">
    <text evidence="6">(Microbial infection) Binds to HIV-1 Rev.</text>
</comment>
<comment type="interaction">
    <interactant intactId="EBI-286693">
        <id>Q92973</id>
    </interactant>
    <interactant intactId="EBI-401755">
        <id>P62993</id>
        <label>GRB2</label>
    </interactant>
    <organismsDiffer>false</organismsDiffer>
    <experiments>2</experiments>
</comment>
<comment type="interaction">
    <interactant intactId="EBI-286693">
        <id>Q92973</id>
    </interactant>
    <interactant intactId="EBI-724092">
        <id>Q13151</id>
        <label>HNRNPA0</label>
    </interactant>
    <organismsDiffer>false</organismsDiffer>
    <experiments>2</experiments>
</comment>
<comment type="interaction">
    <interactant intactId="EBI-286693">
        <id>Q92973</id>
    </interactant>
    <interactant intactId="EBI-352677">
        <id>P09651-2</id>
        <label>HNRNPA1</label>
    </interactant>
    <organismsDiffer>false</organismsDiffer>
    <experiments>2</experiments>
</comment>
<comment type="interaction">
    <interactant intactId="EBI-286693">
        <id>Q92973</id>
    </interactant>
    <interactant intactId="EBI-486809">
        <id>P52272</id>
        <label>HNRNPM</label>
    </interactant>
    <organismsDiffer>false</organismsDiffer>
    <experiments>3</experiments>
</comment>
<comment type="interaction">
    <interactant intactId="EBI-286693">
        <id>Q92973</id>
    </interactant>
    <interactant intactId="EBI-286642">
        <id>P62826</id>
        <label>RAN</label>
    </interactant>
    <organismsDiffer>false</organismsDiffer>
    <experiments>2</experiments>
</comment>
<comment type="interaction">
    <interactant intactId="EBI-11022821">
        <id>Q92973-2</id>
    </interactant>
    <interactant intactId="EBI-400434">
        <id>P35637</id>
        <label>FUS</label>
    </interactant>
    <organismsDiffer>false</organismsDiffer>
    <experiments>2</experiments>
</comment>
<comment type="subcellular location">
    <subcellularLocation>
        <location>Cytoplasm</location>
    </subcellularLocation>
    <subcellularLocation>
        <location>Nucleus</location>
    </subcellularLocation>
</comment>
<comment type="alternative products">
    <event type="alternative splicing"/>
    <isoform>
        <id>Q92973-1</id>
        <name>1</name>
        <sequence type="displayed"/>
    </isoform>
    <isoform>
        <id>Q92973-2</id>
        <name>2</name>
        <sequence type="described" ref="VSP_038028"/>
    </isoform>
    <isoform>
        <id>Q92973-3</id>
        <name>3</name>
        <sequence type="described" ref="VSP_038029"/>
    </isoform>
</comment>
<comment type="similarity">
    <text evidence="17">Belongs to the importin beta family. Importin beta-2 subfamily.</text>
</comment>
<comment type="sequence caution" evidence="17">
    <conflict type="erroneous initiation">
        <sequence resource="EMBL-CDS" id="AAC50723"/>
    </conflict>
</comment>
<comment type="sequence caution" evidence="17">
    <conflict type="erroneous initiation">
        <sequence resource="EMBL-CDS" id="AAH40340"/>
    </conflict>
</comment>
<organism>
    <name type="scientific">Homo sapiens</name>
    <name type="common">Human</name>
    <dbReference type="NCBI Taxonomy" id="9606"/>
    <lineage>
        <taxon>Eukaryota</taxon>
        <taxon>Metazoa</taxon>
        <taxon>Chordata</taxon>
        <taxon>Craniata</taxon>
        <taxon>Vertebrata</taxon>
        <taxon>Euteleostomi</taxon>
        <taxon>Mammalia</taxon>
        <taxon>Eutheria</taxon>
        <taxon>Euarchontoglires</taxon>
        <taxon>Primates</taxon>
        <taxon>Haplorrhini</taxon>
        <taxon>Catarrhini</taxon>
        <taxon>Hominidae</taxon>
        <taxon>Homo</taxon>
    </lineage>
</organism>
<accession>Q92973</accession>
<accession>B4DVC6</accession>
<accession>Q92957</accession>
<accession>Q92975</accession>
<dbReference type="EMBL" id="U70322">
    <property type="protein sequence ID" value="AAC50723.1"/>
    <property type="status" value="ALT_INIT"/>
    <property type="molecule type" value="mRNA"/>
</dbReference>
<dbReference type="EMBL" id="U72069">
    <property type="protein sequence ID" value="AAB58254.1"/>
    <property type="molecule type" value="mRNA"/>
</dbReference>
<dbReference type="EMBL" id="U72395">
    <property type="protein sequence ID" value="AAB68948.1"/>
    <property type="molecule type" value="mRNA"/>
</dbReference>
<dbReference type="EMBL" id="AK301021">
    <property type="protein sequence ID" value="BAG62638.1"/>
    <property type="molecule type" value="mRNA"/>
</dbReference>
<dbReference type="EMBL" id="BC040340">
    <property type="protein sequence ID" value="AAH40340.1"/>
    <property type="status" value="ALT_INIT"/>
    <property type="molecule type" value="mRNA"/>
</dbReference>
<dbReference type="CCDS" id="CCDS4016.1">
    <molecule id="Q92973-2"/>
</dbReference>
<dbReference type="CCDS" id="CCDS43329.1">
    <molecule id="Q92973-1"/>
</dbReference>
<dbReference type="CCDS" id="CCDS93732.1">
    <molecule id="Q92973-3"/>
</dbReference>
<dbReference type="RefSeq" id="NP_001351221.1">
    <molecule id="Q92973-2"/>
    <property type="nucleotide sequence ID" value="NM_001364292.3"/>
</dbReference>
<dbReference type="RefSeq" id="NP_001351222.1">
    <molecule id="Q92973-2"/>
    <property type="nucleotide sequence ID" value="NM_001364293.3"/>
</dbReference>
<dbReference type="RefSeq" id="NP_001351224.1">
    <molecule id="Q92973-3"/>
    <property type="nucleotide sequence ID" value="NM_001364295.3"/>
</dbReference>
<dbReference type="RefSeq" id="NP_002261.3">
    <molecule id="Q92973-1"/>
    <property type="nucleotide sequence ID" value="NM_002270.3"/>
</dbReference>
<dbReference type="RefSeq" id="NP_694858.1">
    <molecule id="Q92973-2"/>
    <property type="nucleotide sequence ID" value="NM_153188.4"/>
</dbReference>
<dbReference type="RefSeq" id="XP_005248557.1">
    <property type="nucleotide sequence ID" value="XM_005248500.2"/>
</dbReference>
<dbReference type="RefSeq" id="XP_047273123.1">
    <molecule id="Q92973-1"/>
    <property type="nucleotide sequence ID" value="XM_047417167.1"/>
</dbReference>
<dbReference type="RefSeq" id="XP_054208540.1">
    <molecule id="Q92973-1"/>
    <property type="nucleotide sequence ID" value="XM_054352565.1"/>
</dbReference>
<dbReference type="PDB" id="1QBK">
    <property type="method" value="X-ray"/>
    <property type="resolution" value="3.00 A"/>
    <property type="chains" value="B=9-898"/>
</dbReference>
<dbReference type="PDB" id="2H4M">
    <property type="method" value="X-ray"/>
    <property type="resolution" value="3.05 A"/>
    <property type="chains" value="A/B=376-898, A/B=9-343"/>
</dbReference>
<dbReference type="PDB" id="2OT8">
    <property type="method" value="X-ray"/>
    <property type="resolution" value="3.10 A"/>
    <property type="chains" value="A/B=9-331, A/B=375-898"/>
</dbReference>
<dbReference type="PDB" id="2QMR">
    <property type="method" value="X-ray"/>
    <property type="resolution" value="3.00 A"/>
    <property type="chains" value="A/B/C/D=9-898"/>
</dbReference>
<dbReference type="PDB" id="2Z5J">
    <property type="method" value="X-ray"/>
    <property type="resolution" value="3.40 A"/>
    <property type="chains" value="A=9-898"/>
</dbReference>
<dbReference type="PDB" id="2Z5K">
    <property type="method" value="X-ray"/>
    <property type="resolution" value="2.60 A"/>
    <property type="chains" value="A=9-898"/>
</dbReference>
<dbReference type="PDB" id="2Z5M">
    <property type="method" value="X-ray"/>
    <property type="resolution" value="3.00 A"/>
    <property type="chains" value="A=9-898"/>
</dbReference>
<dbReference type="PDB" id="2Z5N">
    <property type="method" value="X-ray"/>
    <property type="resolution" value="3.20 A"/>
    <property type="chains" value="A=9-898"/>
</dbReference>
<dbReference type="PDB" id="2Z5O">
    <property type="method" value="X-ray"/>
    <property type="resolution" value="3.20 A"/>
    <property type="chains" value="A=9-898"/>
</dbReference>
<dbReference type="PDB" id="4FDD">
    <property type="method" value="X-ray"/>
    <property type="resolution" value="2.30 A"/>
    <property type="chains" value="A=9-331, A=375-898"/>
</dbReference>
<dbReference type="PDB" id="4FQ3">
    <property type="method" value="X-ray"/>
    <property type="resolution" value="3.00 A"/>
    <property type="chains" value="A=9-898"/>
</dbReference>
<dbReference type="PDB" id="4JLQ">
    <property type="method" value="X-ray"/>
    <property type="resolution" value="3.05 A"/>
    <property type="chains" value="A=9-331, A=375-898"/>
</dbReference>
<dbReference type="PDB" id="4OO6">
    <property type="method" value="X-ray"/>
    <property type="resolution" value="2.70 A"/>
    <property type="chains" value="A=375-898, A=9-331"/>
</dbReference>
<dbReference type="PDB" id="5J3V">
    <property type="method" value="X-ray"/>
    <property type="resolution" value="3.05 A"/>
    <property type="chains" value="A/B=9-331, A/B=375-898"/>
</dbReference>
<dbReference type="PDB" id="5TQC">
    <property type="method" value="X-ray"/>
    <property type="resolution" value="3.00 A"/>
    <property type="chains" value="A=9-343, A=375-898"/>
</dbReference>
<dbReference type="PDB" id="5YVG">
    <property type="method" value="X-ray"/>
    <property type="resolution" value="4.05 A"/>
    <property type="chains" value="A/B=9-344, A/B=376-898"/>
</dbReference>
<dbReference type="PDB" id="5YVH">
    <property type="method" value="X-ray"/>
    <property type="resolution" value="3.15 A"/>
    <property type="chains" value="A=9-344, A=376-898"/>
</dbReference>
<dbReference type="PDB" id="5YVI">
    <property type="method" value="X-ray"/>
    <property type="resolution" value="2.90 A"/>
    <property type="chains" value="A=9-344, A=376-898"/>
</dbReference>
<dbReference type="PDB" id="7CYL">
    <property type="method" value="X-ray"/>
    <property type="resolution" value="2.70 A"/>
    <property type="chains" value="A=9-344, A=376-898"/>
</dbReference>
<dbReference type="PDB" id="7VPW">
    <property type="method" value="X-ray"/>
    <property type="resolution" value="3.76 A"/>
    <property type="chains" value="A=8-344, A=376-898"/>
</dbReference>
<dbReference type="PDB" id="8SGH">
    <property type="method" value="EM"/>
    <property type="resolution" value="3.17 A"/>
    <property type="chains" value="A=8-898"/>
</dbReference>
<dbReference type="PDBsum" id="1QBK"/>
<dbReference type="PDBsum" id="2H4M"/>
<dbReference type="PDBsum" id="2OT8"/>
<dbReference type="PDBsum" id="2QMR"/>
<dbReference type="PDBsum" id="2Z5J"/>
<dbReference type="PDBsum" id="2Z5K"/>
<dbReference type="PDBsum" id="2Z5M"/>
<dbReference type="PDBsum" id="2Z5N"/>
<dbReference type="PDBsum" id="2Z5O"/>
<dbReference type="PDBsum" id="4FDD"/>
<dbReference type="PDBsum" id="4FQ3"/>
<dbReference type="PDBsum" id="4JLQ"/>
<dbReference type="PDBsum" id="4OO6"/>
<dbReference type="PDBsum" id="5J3V"/>
<dbReference type="PDBsum" id="5TQC"/>
<dbReference type="PDBsum" id="5YVG"/>
<dbReference type="PDBsum" id="5YVH"/>
<dbReference type="PDBsum" id="5YVI"/>
<dbReference type="PDBsum" id="7CYL"/>
<dbReference type="PDBsum" id="7VPW"/>
<dbReference type="PDBsum" id="8SGH"/>
<dbReference type="EMDB" id="EMD-40455"/>
<dbReference type="SMR" id="Q92973"/>
<dbReference type="BioGRID" id="110040">
    <property type="interactions" value="321"/>
</dbReference>
<dbReference type="CORUM" id="Q92973"/>
<dbReference type="DIP" id="DIP-29335N"/>
<dbReference type="FunCoup" id="Q92973">
    <property type="interactions" value="5255"/>
</dbReference>
<dbReference type="IntAct" id="Q92973">
    <property type="interactions" value="134"/>
</dbReference>
<dbReference type="MINT" id="Q92973"/>
<dbReference type="STRING" id="9606.ENSP00000336712"/>
<dbReference type="TCDB" id="1.I.1.1.3">
    <property type="family name" value="the nuclear pore complex (npc) family"/>
</dbReference>
<dbReference type="GlyGen" id="Q92973">
    <property type="glycosylation" value="1 site, 1 O-linked glycan (1 site)"/>
</dbReference>
<dbReference type="iPTMnet" id="Q92973"/>
<dbReference type="MetOSite" id="Q92973"/>
<dbReference type="PhosphoSitePlus" id="Q92973"/>
<dbReference type="SwissPalm" id="Q92973"/>
<dbReference type="BioMuta" id="TNPO1"/>
<dbReference type="DMDM" id="259016171"/>
<dbReference type="jPOST" id="Q92973"/>
<dbReference type="MassIVE" id="Q92973"/>
<dbReference type="PaxDb" id="9606-ENSP00000336712"/>
<dbReference type="PeptideAtlas" id="Q92973"/>
<dbReference type="ProteomicsDB" id="75635">
    <molecule id="Q92973-1"/>
</dbReference>
<dbReference type="ProteomicsDB" id="75636">
    <molecule id="Q92973-2"/>
</dbReference>
<dbReference type="ProteomicsDB" id="75637">
    <molecule id="Q92973-3"/>
</dbReference>
<dbReference type="Pumba" id="Q92973"/>
<dbReference type="Antibodypedia" id="4275">
    <property type="antibodies" value="299 antibodies from 30 providers"/>
</dbReference>
<dbReference type="DNASU" id="3842"/>
<dbReference type="Ensembl" id="ENST00000337273.10">
    <molecule id="Q92973-1"/>
    <property type="protein sequence ID" value="ENSP00000336712.5"/>
    <property type="gene ID" value="ENSG00000083312.19"/>
</dbReference>
<dbReference type="Ensembl" id="ENST00000506351.6">
    <molecule id="Q92973-2"/>
    <property type="protein sequence ID" value="ENSP00000425118.2"/>
    <property type="gene ID" value="ENSG00000083312.19"/>
</dbReference>
<dbReference type="Ensembl" id="ENST00000523768.5">
    <molecule id="Q92973-3"/>
    <property type="protein sequence ID" value="ENSP00000428899.1"/>
    <property type="gene ID" value="ENSG00000083312.19"/>
</dbReference>
<dbReference type="GeneID" id="3842"/>
<dbReference type="KEGG" id="hsa:3842"/>
<dbReference type="MANE-Select" id="ENST00000337273.10">
    <property type="protein sequence ID" value="ENSP00000336712.5"/>
    <property type="RefSeq nucleotide sequence ID" value="NM_002270.4"/>
    <property type="RefSeq protein sequence ID" value="NP_002261.3"/>
</dbReference>
<dbReference type="UCSC" id="uc003kci.5">
    <molecule id="Q92973-1"/>
    <property type="organism name" value="human"/>
</dbReference>
<dbReference type="AGR" id="HGNC:6401"/>
<dbReference type="CTD" id="3842"/>
<dbReference type="DisGeNET" id="3842"/>
<dbReference type="GeneCards" id="TNPO1"/>
<dbReference type="HGNC" id="HGNC:6401">
    <property type="gene designation" value="TNPO1"/>
</dbReference>
<dbReference type="HPA" id="ENSG00000083312">
    <property type="expression patterns" value="Low tissue specificity"/>
</dbReference>
<dbReference type="MalaCards" id="TNPO1"/>
<dbReference type="MIM" id="602901">
    <property type="type" value="gene"/>
</dbReference>
<dbReference type="neXtProt" id="NX_Q92973"/>
<dbReference type="OpenTargets" id="ENSG00000083312"/>
<dbReference type="PharmGKB" id="PA30192"/>
<dbReference type="VEuPathDB" id="HostDB:ENSG00000083312"/>
<dbReference type="eggNOG" id="KOG2023">
    <property type="taxonomic scope" value="Eukaryota"/>
</dbReference>
<dbReference type="GeneTree" id="ENSGT00940000155389"/>
<dbReference type="HOGENOM" id="CLU_008136_0_0_1"/>
<dbReference type="InParanoid" id="Q92973"/>
<dbReference type="OMA" id="AQEGAMS"/>
<dbReference type="OrthoDB" id="951172at2759"/>
<dbReference type="PAN-GO" id="Q92973">
    <property type="GO annotations" value="5 GO annotations based on evolutionary models"/>
</dbReference>
<dbReference type="PhylomeDB" id="Q92973"/>
<dbReference type="TreeFam" id="TF300825"/>
<dbReference type="PathwayCommons" id="Q92973"/>
<dbReference type="Reactome" id="R-HSA-450513">
    <property type="pathway name" value="Tristetraprolin (TTP, ZFP36) binds and destabilizes mRNA"/>
</dbReference>
<dbReference type="Reactome" id="R-HSA-5620924">
    <property type="pathway name" value="Intraflagellar transport"/>
</dbReference>
<dbReference type="Reactome" id="R-HSA-9615933">
    <property type="pathway name" value="Postmitotic nuclear pore complex (NPC) reformation"/>
</dbReference>
<dbReference type="SignaLink" id="Q92973"/>
<dbReference type="SIGNOR" id="Q92973"/>
<dbReference type="BioGRID-ORCS" id="3842">
    <property type="hits" value="235 hits in 1184 CRISPR screens"/>
</dbReference>
<dbReference type="CD-CODE" id="25CCE98C">
    <property type="entry name" value="Synthetic Condensate 000047"/>
</dbReference>
<dbReference type="CD-CODE" id="94A6FFB4">
    <property type="entry name" value="Synthetic Condensate 000253"/>
</dbReference>
<dbReference type="CD-CODE" id="9A9D7F4D">
    <property type="entry name" value="Synthetic Condensate 000014"/>
</dbReference>
<dbReference type="CD-CODE" id="DEE660B4">
    <property type="entry name" value="Stress granule"/>
</dbReference>
<dbReference type="CD-CODE" id="FB4E32DD">
    <property type="entry name" value="Presynaptic clusters and postsynaptic densities"/>
</dbReference>
<dbReference type="ChiTaRS" id="TNPO1">
    <property type="organism name" value="human"/>
</dbReference>
<dbReference type="EvolutionaryTrace" id="Q92973"/>
<dbReference type="GeneWiki" id="Transportin_1"/>
<dbReference type="GenomeRNAi" id="3842"/>
<dbReference type="Pharos" id="Q92973">
    <property type="development level" value="Tbio"/>
</dbReference>
<dbReference type="PRO" id="PR:Q92973"/>
<dbReference type="Proteomes" id="UP000005640">
    <property type="component" value="Chromosome 5"/>
</dbReference>
<dbReference type="RNAct" id="Q92973">
    <property type="molecule type" value="protein"/>
</dbReference>
<dbReference type="Bgee" id="ENSG00000083312">
    <property type="expression patterns" value="Expressed in corpus epididymis and 215 other cell types or tissues"/>
</dbReference>
<dbReference type="ExpressionAtlas" id="Q92973">
    <property type="expression patterns" value="baseline and differential"/>
</dbReference>
<dbReference type="GO" id="GO:0005929">
    <property type="term" value="C:cilium"/>
    <property type="evidence" value="ECO:0000304"/>
    <property type="project" value="Reactome"/>
</dbReference>
<dbReference type="GO" id="GO:0005737">
    <property type="term" value="C:cytoplasm"/>
    <property type="evidence" value="ECO:0000318"/>
    <property type="project" value="GO_Central"/>
</dbReference>
<dbReference type="GO" id="GO:0005829">
    <property type="term" value="C:cytosol"/>
    <property type="evidence" value="ECO:0000304"/>
    <property type="project" value="Reactome"/>
</dbReference>
<dbReference type="GO" id="GO:0070062">
    <property type="term" value="C:extracellular exosome"/>
    <property type="evidence" value="ECO:0007005"/>
    <property type="project" value="UniProtKB"/>
</dbReference>
<dbReference type="GO" id="GO:0005730">
    <property type="term" value="C:nucleolus"/>
    <property type="evidence" value="ECO:0000314"/>
    <property type="project" value="HPA"/>
</dbReference>
<dbReference type="GO" id="GO:0005654">
    <property type="term" value="C:nucleoplasm"/>
    <property type="evidence" value="ECO:0000314"/>
    <property type="project" value="HPA"/>
</dbReference>
<dbReference type="GO" id="GO:0005634">
    <property type="term" value="C:nucleus"/>
    <property type="evidence" value="ECO:0000318"/>
    <property type="project" value="GO_Central"/>
</dbReference>
<dbReference type="GO" id="GO:0061608">
    <property type="term" value="F:nuclear import signal receptor activity"/>
    <property type="evidence" value="ECO:0000318"/>
    <property type="project" value="GO_Central"/>
</dbReference>
<dbReference type="GO" id="GO:0008139">
    <property type="term" value="F:nuclear localization sequence binding"/>
    <property type="evidence" value="ECO:0000318"/>
    <property type="project" value="GO_Central"/>
</dbReference>
<dbReference type="GO" id="GO:0003723">
    <property type="term" value="F:RNA binding"/>
    <property type="evidence" value="ECO:0007005"/>
    <property type="project" value="UniProtKB"/>
</dbReference>
<dbReference type="GO" id="GO:0031267">
    <property type="term" value="F:small GTPase binding"/>
    <property type="evidence" value="ECO:0007669"/>
    <property type="project" value="InterPro"/>
</dbReference>
<dbReference type="GO" id="GO:0006606">
    <property type="term" value="P:protein import into nucleus"/>
    <property type="evidence" value="ECO:0000314"/>
    <property type="project" value="UniProtKB"/>
</dbReference>
<dbReference type="DisProt" id="DP01457"/>
<dbReference type="FunFam" id="1.25.10.10:FF:000028">
    <property type="entry name" value="Transportin-1 isoform 1"/>
    <property type="match status" value="1"/>
</dbReference>
<dbReference type="Gene3D" id="1.25.10.10">
    <property type="entry name" value="Leucine-rich Repeat Variant"/>
    <property type="match status" value="2"/>
</dbReference>
<dbReference type="IDEAL" id="IID00094"/>
<dbReference type="InterPro" id="IPR011989">
    <property type="entry name" value="ARM-like"/>
</dbReference>
<dbReference type="InterPro" id="IPR016024">
    <property type="entry name" value="ARM-type_fold"/>
</dbReference>
<dbReference type="InterPro" id="IPR000357">
    <property type="entry name" value="HEAT"/>
</dbReference>
<dbReference type="InterPro" id="IPR001494">
    <property type="entry name" value="Importin-beta_N"/>
</dbReference>
<dbReference type="InterPro" id="IPR040122">
    <property type="entry name" value="Importin_beta"/>
</dbReference>
<dbReference type="PANTHER" id="PTHR10527">
    <property type="entry name" value="IMPORTIN BETA"/>
    <property type="match status" value="1"/>
</dbReference>
<dbReference type="Pfam" id="PF02985">
    <property type="entry name" value="HEAT"/>
    <property type="match status" value="1"/>
</dbReference>
<dbReference type="Pfam" id="PF13513">
    <property type="entry name" value="HEAT_EZ"/>
    <property type="match status" value="1"/>
</dbReference>
<dbReference type="Pfam" id="PF03810">
    <property type="entry name" value="IBN_N"/>
    <property type="match status" value="1"/>
</dbReference>
<dbReference type="SMART" id="SM00913">
    <property type="entry name" value="IBN_N"/>
    <property type="match status" value="1"/>
</dbReference>
<dbReference type="SUPFAM" id="SSF48371">
    <property type="entry name" value="ARM repeat"/>
    <property type="match status" value="1"/>
</dbReference>
<dbReference type="PROSITE" id="PS50166">
    <property type="entry name" value="IMPORTIN_B_NT"/>
    <property type="match status" value="1"/>
</dbReference>
<keyword id="KW-0002">3D-structure</keyword>
<keyword id="KW-0007">Acetylation</keyword>
<keyword id="KW-0025">Alternative splicing</keyword>
<keyword id="KW-0963">Cytoplasm</keyword>
<keyword id="KW-0945">Host-virus interaction</keyword>
<keyword id="KW-0539">Nucleus</keyword>
<keyword id="KW-0653">Protein transport</keyword>
<keyword id="KW-1267">Proteomics identification</keyword>
<keyword id="KW-1185">Reference proteome</keyword>
<keyword id="KW-0677">Repeat</keyword>
<keyword id="KW-0813">Transport</keyword>
<protein>
    <recommendedName>
        <fullName>Transportin-1</fullName>
    </recommendedName>
    <alternativeName>
        <fullName>Importin beta-2</fullName>
    </alternativeName>
    <alternativeName>
        <fullName>Karyopherin beta-2</fullName>
    </alternativeName>
    <alternativeName>
        <fullName>M9 region interaction protein</fullName>
        <shortName>MIP</shortName>
    </alternativeName>
</protein>
<name>TNPO1_HUMAN</name>